<keyword id="KW-0997">Cell inner membrane</keyword>
<keyword id="KW-1003">Cell membrane</keyword>
<keyword id="KW-0406">Ion transport</keyword>
<keyword id="KW-0472">Membrane</keyword>
<keyword id="KW-0520">NAD</keyword>
<keyword id="KW-0915">Sodium</keyword>
<keyword id="KW-0739">Sodium transport</keyword>
<keyword id="KW-1278">Translocase</keyword>
<keyword id="KW-0812">Transmembrane</keyword>
<keyword id="KW-1133">Transmembrane helix</keyword>
<keyword id="KW-0813">Transport</keyword>
<keyword id="KW-0830">Ubiquinone</keyword>
<organism>
    <name type="scientific">Shewanella baltica (strain OS185)</name>
    <dbReference type="NCBI Taxonomy" id="402882"/>
    <lineage>
        <taxon>Bacteria</taxon>
        <taxon>Pseudomonadati</taxon>
        <taxon>Pseudomonadota</taxon>
        <taxon>Gammaproteobacteria</taxon>
        <taxon>Alteromonadales</taxon>
        <taxon>Shewanellaceae</taxon>
        <taxon>Shewanella</taxon>
    </lineage>
</organism>
<protein>
    <recommendedName>
        <fullName evidence="1">Na(+)-translocating NADH-quinone reductase subunit D</fullName>
        <shortName evidence="1">Na(+)-NQR subunit D</shortName>
        <shortName evidence="1">Na(+)-translocating NQR subunit D</shortName>
        <ecNumber evidence="1">7.2.1.1</ecNumber>
    </recommendedName>
    <alternativeName>
        <fullName evidence="1">NQR complex subunit D</fullName>
    </alternativeName>
    <alternativeName>
        <fullName evidence="1">NQR-1 subunit D</fullName>
    </alternativeName>
</protein>
<accession>A6WRX3</accession>
<comment type="function">
    <text evidence="1">NQR complex catalyzes the reduction of ubiquinone-1 to ubiquinol by two successive reactions, coupled with the transport of Na(+) ions from the cytoplasm to the periplasm. NqrA to NqrE are probably involved in the second step, the conversion of ubisemiquinone to ubiquinol.</text>
</comment>
<comment type="catalytic activity">
    <reaction evidence="1">
        <text>a ubiquinone + n Na(+)(in) + NADH + H(+) = a ubiquinol + n Na(+)(out) + NAD(+)</text>
        <dbReference type="Rhea" id="RHEA:47748"/>
        <dbReference type="Rhea" id="RHEA-COMP:9565"/>
        <dbReference type="Rhea" id="RHEA-COMP:9566"/>
        <dbReference type="ChEBI" id="CHEBI:15378"/>
        <dbReference type="ChEBI" id="CHEBI:16389"/>
        <dbReference type="ChEBI" id="CHEBI:17976"/>
        <dbReference type="ChEBI" id="CHEBI:29101"/>
        <dbReference type="ChEBI" id="CHEBI:57540"/>
        <dbReference type="ChEBI" id="CHEBI:57945"/>
        <dbReference type="EC" id="7.2.1.1"/>
    </reaction>
</comment>
<comment type="subunit">
    <text evidence="1">Composed of six subunits; NqrA, NqrB, NqrC, NqrD, NqrE and NqrF.</text>
</comment>
<comment type="subcellular location">
    <subcellularLocation>
        <location evidence="1">Cell inner membrane</location>
        <topology evidence="1">Multi-pass membrane protein</topology>
    </subcellularLocation>
</comment>
<comment type="similarity">
    <text evidence="1">Belongs to the NqrDE/RnfAE family.</text>
</comment>
<gene>
    <name evidence="1" type="primary">nqrD</name>
    <name type="ordered locus">Shew185_3435</name>
</gene>
<reference key="1">
    <citation type="submission" date="2007-07" db="EMBL/GenBank/DDBJ databases">
        <title>Complete sequence of chromosome of Shewanella baltica OS185.</title>
        <authorList>
            <consortium name="US DOE Joint Genome Institute"/>
            <person name="Copeland A."/>
            <person name="Lucas S."/>
            <person name="Lapidus A."/>
            <person name="Barry K."/>
            <person name="Glavina del Rio T."/>
            <person name="Dalin E."/>
            <person name="Tice H."/>
            <person name="Pitluck S."/>
            <person name="Sims D."/>
            <person name="Brettin T."/>
            <person name="Bruce D."/>
            <person name="Detter J.C."/>
            <person name="Han C."/>
            <person name="Schmutz J."/>
            <person name="Larimer F."/>
            <person name="Land M."/>
            <person name="Hauser L."/>
            <person name="Kyrpides N."/>
            <person name="Mikhailova N."/>
            <person name="Brettar I."/>
            <person name="Rodrigues J."/>
            <person name="Konstantinidis K."/>
            <person name="Tiedje J."/>
            <person name="Richardson P."/>
        </authorList>
    </citation>
    <scope>NUCLEOTIDE SEQUENCE [LARGE SCALE GENOMIC DNA]</scope>
    <source>
        <strain>OS185</strain>
    </source>
</reference>
<sequence>MSDAKELKQVLTGPIVNNNPIALQVLGVCSALAVTSKLETALVMALALTAVTAFSNLFISMIRNHIPSSVRIIVQMTIIASLVIVVDQLLQAYAYQISKQLSVFVGLIITNCIVMGRAEAYAMKTPPMMSFMDGIGNGLGYGAILLAVGFVRELFGNGSLFGVEILHKISDGGWYQPNGLLLLPPSAFFLIGVLIWIIRTYKPEQVEAKG</sequence>
<dbReference type="EC" id="7.2.1.1" evidence="1"/>
<dbReference type="EMBL" id="CP000753">
    <property type="protein sequence ID" value="ABS09562.1"/>
    <property type="molecule type" value="Genomic_DNA"/>
</dbReference>
<dbReference type="RefSeq" id="WP_006080467.1">
    <property type="nucleotide sequence ID" value="NC_009665.1"/>
</dbReference>
<dbReference type="SMR" id="A6WRX3"/>
<dbReference type="KEGG" id="sbm:Shew185_3435"/>
<dbReference type="HOGENOM" id="CLU_046659_1_1_6"/>
<dbReference type="GO" id="GO:0005886">
    <property type="term" value="C:plasma membrane"/>
    <property type="evidence" value="ECO:0007669"/>
    <property type="project" value="UniProtKB-SubCell"/>
</dbReference>
<dbReference type="GO" id="GO:0016655">
    <property type="term" value="F:oxidoreductase activity, acting on NAD(P)H, quinone or similar compound as acceptor"/>
    <property type="evidence" value="ECO:0007669"/>
    <property type="project" value="UniProtKB-UniRule"/>
</dbReference>
<dbReference type="GO" id="GO:0006814">
    <property type="term" value="P:sodium ion transport"/>
    <property type="evidence" value="ECO:0007669"/>
    <property type="project" value="UniProtKB-UniRule"/>
</dbReference>
<dbReference type="HAMAP" id="MF_00428">
    <property type="entry name" value="NqrD"/>
    <property type="match status" value="1"/>
</dbReference>
<dbReference type="InterPro" id="IPR011292">
    <property type="entry name" value="NqrD"/>
</dbReference>
<dbReference type="InterPro" id="IPR003667">
    <property type="entry name" value="NqrDE/RnfAE"/>
</dbReference>
<dbReference type="NCBIfam" id="TIGR01939">
    <property type="entry name" value="nqrD"/>
    <property type="match status" value="1"/>
</dbReference>
<dbReference type="NCBIfam" id="NF006777">
    <property type="entry name" value="PRK09292.1"/>
    <property type="match status" value="1"/>
</dbReference>
<dbReference type="NCBIfam" id="NF009070">
    <property type="entry name" value="PRK12405.1"/>
    <property type="match status" value="1"/>
</dbReference>
<dbReference type="PANTHER" id="PTHR30586">
    <property type="entry name" value="ELECTRON TRANSPORT COMPLEX PROTEIN RNFE"/>
    <property type="match status" value="1"/>
</dbReference>
<dbReference type="PANTHER" id="PTHR30586:SF1">
    <property type="entry name" value="NA(+)-TRANSLOCATING NADH-QUINONE REDUCTASE SUBUNIT D"/>
    <property type="match status" value="1"/>
</dbReference>
<dbReference type="Pfam" id="PF02508">
    <property type="entry name" value="Rnf-Nqr"/>
    <property type="match status" value="1"/>
</dbReference>
<dbReference type="PIRSF" id="PIRSF006102">
    <property type="entry name" value="NQR_DE"/>
    <property type="match status" value="1"/>
</dbReference>
<evidence type="ECO:0000255" key="1">
    <source>
        <dbReference type="HAMAP-Rule" id="MF_00428"/>
    </source>
</evidence>
<feature type="chain" id="PRO_1000060166" description="Na(+)-translocating NADH-quinone reductase subunit D">
    <location>
        <begin position="1"/>
        <end position="210"/>
    </location>
</feature>
<feature type="transmembrane region" description="Helical" evidence="1">
    <location>
        <begin position="14"/>
        <end position="34"/>
    </location>
</feature>
<feature type="transmembrane region" description="Helical" evidence="1">
    <location>
        <begin position="42"/>
        <end position="62"/>
    </location>
</feature>
<feature type="transmembrane region" description="Helical" evidence="1">
    <location>
        <begin position="72"/>
        <end position="92"/>
    </location>
</feature>
<feature type="transmembrane region" description="Helical" evidence="1">
    <location>
        <begin position="103"/>
        <end position="123"/>
    </location>
</feature>
<feature type="transmembrane region" description="Helical" evidence="1">
    <location>
        <begin position="131"/>
        <end position="151"/>
    </location>
</feature>
<feature type="transmembrane region" description="Helical" evidence="1">
    <location>
        <begin position="178"/>
        <end position="198"/>
    </location>
</feature>
<proteinExistence type="inferred from homology"/>
<name>NQRD_SHEB8</name>